<comment type="function">
    <text evidence="2">Component of the ubiquinol-cytochrome c reductase complex (complex III or cytochrome b-c1 complex) that is part of the mitochondrial respiratory chain. The b-c1 complex mediates electron transfer from ubiquinol to cytochrome c. Contributes to the generation of a proton gradient across the mitochondrial membrane that is then used for ATP synthesis.</text>
</comment>
<comment type="cofactor">
    <cofactor evidence="2">
        <name>heme b</name>
        <dbReference type="ChEBI" id="CHEBI:60344"/>
    </cofactor>
    <text evidence="2">Binds 2 heme b groups non-covalently.</text>
</comment>
<comment type="subunit">
    <text evidence="2">The cytochrome bc1 complex contains 11 subunits: 3 respiratory subunits (MT-CYB, CYC1 and UQCRFS1), 2 core proteins (UQCRC1 and UQCRC2) and 6 low-molecular weight proteins (UQCRH/QCR6, UQCRB/QCR7, UQCRQ/QCR8, UQCR10/QCR9, UQCR11/QCR10 and a cleavage product of UQCRFS1). This cytochrome bc1 complex then forms a dimer.</text>
</comment>
<comment type="subcellular location">
    <subcellularLocation>
        <location evidence="2">Mitochondrion inner membrane</location>
        <topology evidence="2">Multi-pass membrane protein</topology>
    </subcellularLocation>
</comment>
<comment type="miscellaneous">
    <text evidence="1">Heme 1 (or BL or b562) is low-potential and absorbs at about 562 nm, and heme 2 (or BH or b566) is high-potential and absorbs at about 566 nm.</text>
</comment>
<comment type="similarity">
    <text evidence="3 4">Belongs to the cytochrome b family.</text>
</comment>
<comment type="caution">
    <text evidence="2">The full-length protein contains only eight transmembrane helices, not nine as predicted by bioinformatics tools.</text>
</comment>
<keyword id="KW-0249">Electron transport</keyword>
<keyword id="KW-0349">Heme</keyword>
<keyword id="KW-0408">Iron</keyword>
<keyword id="KW-0472">Membrane</keyword>
<keyword id="KW-0479">Metal-binding</keyword>
<keyword id="KW-0496">Mitochondrion</keyword>
<keyword id="KW-0999">Mitochondrion inner membrane</keyword>
<keyword id="KW-0679">Respiratory chain</keyword>
<keyword id="KW-0812">Transmembrane</keyword>
<keyword id="KW-1133">Transmembrane helix</keyword>
<keyword id="KW-0813">Transport</keyword>
<keyword id="KW-0830">Ubiquinone</keyword>
<proteinExistence type="inferred from homology"/>
<geneLocation type="mitochondrion"/>
<gene>
    <name type="primary">MT-CYB</name>
    <name type="synonym">COB</name>
    <name type="synonym">CYTB</name>
    <name type="synonym">MTCYB</name>
</gene>
<organism>
    <name type="scientific">Dipodomys ingens</name>
    <name type="common">Giant kangaroo rat</name>
    <name type="synonym">Perodipus ingens</name>
    <dbReference type="NCBI Taxonomy" id="104298"/>
    <lineage>
        <taxon>Eukaryota</taxon>
        <taxon>Metazoa</taxon>
        <taxon>Chordata</taxon>
        <taxon>Craniata</taxon>
        <taxon>Vertebrata</taxon>
        <taxon>Euteleostomi</taxon>
        <taxon>Mammalia</taxon>
        <taxon>Eutheria</taxon>
        <taxon>Euarchontoglires</taxon>
        <taxon>Glires</taxon>
        <taxon>Rodentia</taxon>
        <taxon>Castorimorpha</taxon>
        <taxon>Heteromyidae</taxon>
        <taxon>Dipodomyinae</taxon>
        <taxon>Dipodomys</taxon>
    </lineage>
</organism>
<name>CYB_DIPIN</name>
<reference key="1">
    <citation type="journal article" date="2005" name="J. Mammal.">
        <title>Phylogenetics of the new world rodent family Heteromyidae.</title>
        <authorList>
            <person name="Alexander L.F."/>
            <person name="Riddle B.R."/>
        </authorList>
    </citation>
    <scope>NUCLEOTIDE SEQUENCE [GENOMIC DNA]</scope>
    <source>
        <strain>Isolate LVT 2057</strain>
    </source>
</reference>
<sequence length="379" mass="42805">MTIMRKTHPLMKMVNHAFIDLPTPSNISGWWNFGSLLGVCLVIQIASGLFLAMHYTPDTLTAFSSVTHICRDVNYGWLIRYMHANGASLFFICLYLHXGRGIYYGSYSYMETWNIGIILLFLTMATAFMGYVLPWGQMSFWGATVITNLLSAIPYIGTDLVEWIWGGFSVDKATLNRFFAFHFILPFIIAAMAMVHLLFLHETGSNNPLGIPSDCDKIPFPPYYTTKDFLGVVLLLAFFFTLVLFFPDLLGDPDNYSPANPLNTPPHIKPEWYFLFAYAILRSIPNKLGGVIALVXSXLXLALIPHIQTAKQRSLMFRPISQLXFWLLVSDVLVLTWIGGQPVEPPFIIIGQIASIXYFTIILVLMPIAGIIENKMLKW</sequence>
<dbReference type="EMBL" id="AY926377">
    <property type="protein sequence ID" value="AAY23220.1"/>
    <property type="molecule type" value="Genomic_DNA"/>
</dbReference>
<dbReference type="GO" id="GO:0005743">
    <property type="term" value="C:mitochondrial inner membrane"/>
    <property type="evidence" value="ECO:0007669"/>
    <property type="project" value="UniProtKB-SubCell"/>
</dbReference>
<dbReference type="GO" id="GO:0045275">
    <property type="term" value="C:respiratory chain complex III"/>
    <property type="evidence" value="ECO:0007669"/>
    <property type="project" value="InterPro"/>
</dbReference>
<dbReference type="GO" id="GO:0046872">
    <property type="term" value="F:metal ion binding"/>
    <property type="evidence" value="ECO:0007669"/>
    <property type="project" value="UniProtKB-KW"/>
</dbReference>
<dbReference type="GO" id="GO:0008121">
    <property type="term" value="F:ubiquinol-cytochrome-c reductase activity"/>
    <property type="evidence" value="ECO:0007669"/>
    <property type="project" value="InterPro"/>
</dbReference>
<dbReference type="GO" id="GO:0006122">
    <property type="term" value="P:mitochondrial electron transport, ubiquinol to cytochrome c"/>
    <property type="evidence" value="ECO:0007669"/>
    <property type="project" value="TreeGrafter"/>
</dbReference>
<dbReference type="CDD" id="cd00290">
    <property type="entry name" value="cytochrome_b_C"/>
    <property type="match status" value="1"/>
</dbReference>
<dbReference type="CDD" id="cd00284">
    <property type="entry name" value="Cytochrome_b_N"/>
    <property type="match status" value="1"/>
</dbReference>
<dbReference type="FunFam" id="1.20.810.10:FF:000002">
    <property type="entry name" value="Cytochrome b"/>
    <property type="match status" value="1"/>
</dbReference>
<dbReference type="Gene3D" id="1.20.810.10">
    <property type="entry name" value="Cytochrome Bc1 Complex, Chain C"/>
    <property type="match status" value="1"/>
</dbReference>
<dbReference type="InterPro" id="IPR005798">
    <property type="entry name" value="Cyt_b/b6_C"/>
</dbReference>
<dbReference type="InterPro" id="IPR036150">
    <property type="entry name" value="Cyt_b/b6_C_sf"/>
</dbReference>
<dbReference type="InterPro" id="IPR005797">
    <property type="entry name" value="Cyt_b/b6_N"/>
</dbReference>
<dbReference type="InterPro" id="IPR027387">
    <property type="entry name" value="Cytb/b6-like_sf"/>
</dbReference>
<dbReference type="InterPro" id="IPR030689">
    <property type="entry name" value="Cytochrome_b"/>
</dbReference>
<dbReference type="InterPro" id="IPR048260">
    <property type="entry name" value="Cytochrome_b_C_euk/bac"/>
</dbReference>
<dbReference type="InterPro" id="IPR048259">
    <property type="entry name" value="Cytochrome_b_N_euk/bac"/>
</dbReference>
<dbReference type="InterPro" id="IPR016174">
    <property type="entry name" value="Di-haem_cyt_TM"/>
</dbReference>
<dbReference type="PANTHER" id="PTHR19271">
    <property type="entry name" value="CYTOCHROME B"/>
    <property type="match status" value="1"/>
</dbReference>
<dbReference type="PANTHER" id="PTHR19271:SF16">
    <property type="entry name" value="CYTOCHROME B"/>
    <property type="match status" value="1"/>
</dbReference>
<dbReference type="Pfam" id="PF00032">
    <property type="entry name" value="Cytochrom_B_C"/>
    <property type="match status" value="1"/>
</dbReference>
<dbReference type="Pfam" id="PF00033">
    <property type="entry name" value="Cytochrome_B"/>
    <property type="match status" value="1"/>
</dbReference>
<dbReference type="PIRSF" id="PIRSF038885">
    <property type="entry name" value="COB"/>
    <property type="match status" value="1"/>
</dbReference>
<dbReference type="SUPFAM" id="SSF81648">
    <property type="entry name" value="a domain/subunit of cytochrome bc1 complex (Ubiquinol-cytochrome c reductase)"/>
    <property type="match status" value="1"/>
</dbReference>
<dbReference type="SUPFAM" id="SSF81342">
    <property type="entry name" value="Transmembrane di-heme cytochromes"/>
    <property type="match status" value="1"/>
</dbReference>
<dbReference type="PROSITE" id="PS51003">
    <property type="entry name" value="CYTB_CTER"/>
    <property type="match status" value="1"/>
</dbReference>
<dbReference type="PROSITE" id="PS51002">
    <property type="entry name" value="CYTB_NTER"/>
    <property type="match status" value="1"/>
</dbReference>
<evidence type="ECO:0000250" key="1"/>
<evidence type="ECO:0000250" key="2">
    <source>
        <dbReference type="UniProtKB" id="P00157"/>
    </source>
</evidence>
<evidence type="ECO:0000255" key="3">
    <source>
        <dbReference type="PROSITE-ProRule" id="PRU00967"/>
    </source>
</evidence>
<evidence type="ECO:0000255" key="4">
    <source>
        <dbReference type="PROSITE-ProRule" id="PRU00968"/>
    </source>
</evidence>
<accession>Q508M6</accession>
<feature type="chain" id="PRO_0000255040" description="Cytochrome b">
    <location>
        <begin position="1"/>
        <end position="379"/>
    </location>
</feature>
<feature type="transmembrane region" description="Helical" evidence="2">
    <location>
        <begin position="33"/>
        <end position="53"/>
    </location>
</feature>
<feature type="transmembrane region" description="Helical" evidence="2">
    <location>
        <begin position="77"/>
        <end position="98"/>
    </location>
</feature>
<feature type="transmembrane region" description="Helical" evidence="2">
    <location>
        <begin position="113"/>
        <end position="133"/>
    </location>
</feature>
<feature type="transmembrane region" description="Helical" evidence="2">
    <location>
        <begin position="178"/>
        <end position="198"/>
    </location>
</feature>
<feature type="transmembrane region" description="Helical" evidence="2">
    <location>
        <begin position="226"/>
        <end position="246"/>
    </location>
</feature>
<feature type="transmembrane region" description="Helical" evidence="2">
    <location>
        <begin position="288"/>
        <end position="308"/>
    </location>
</feature>
<feature type="transmembrane region" description="Helical" evidence="2">
    <location>
        <begin position="320"/>
        <end position="340"/>
    </location>
</feature>
<feature type="transmembrane region" description="Helical" evidence="2">
    <location>
        <begin position="347"/>
        <end position="367"/>
    </location>
</feature>
<feature type="binding site" description="axial binding residue" evidence="2">
    <location>
        <position position="83"/>
    </location>
    <ligand>
        <name>heme b</name>
        <dbReference type="ChEBI" id="CHEBI:60344"/>
        <label>b562</label>
    </ligand>
    <ligandPart>
        <name>Fe</name>
        <dbReference type="ChEBI" id="CHEBI:18248"/>
    </ligandPart>
</feature>
<feature type="binding site" description="axial binding residue" evidence="2">
    <location>
        <position position="97"/>
    </location>
    <ligand>
        <name>heme b</name>
        <dbReference type="ChEBI" id="CHEBI:60344"/>
        <label>b566</label>
    </ligand>
    <ligandPart>
        <name>Fe</name>
        <dbReference type="ChEBI" id="CHEBI:18248"/>
    </ligandPart>
</feature>
<feature type="binding site" description="axial binding residue" evidence="2">
    <location>
        <position position="182"/>
    </location>
    <ligand>
        <name>heme b</name>
        <dbReference type="ChEBI" id="CHEBI:60344"/>
        <label>b562</label>
    </ligand>
    <ligandPart>
        <name>Fe</name>
        <dbReference type="ChEBI" id="CHEBI:18248"/>
    </ligandPart>
</feature>
<feature type="binding site" description="axial binding residue" evidence="2">
    <location>
        <position position="196"/>
    </location>
    <ligand>
        <name>heme b</name>
        <dbReference type="ChEBI" id="CHEBI:60344"/>
        <label>b566</label>
    </ligand>
    <ligandPart>
        <name>Fe</name>
        <dbReference type="ChEBI" id="CHEBI:18248"/>
    </ligandPart>
</feature>
<feature type="binding site" evidence="2">
    <location>
        <position position="201"/>
    </location>
    <ligand>
        <name>a ubiquinone</name>
        <dbReference type="ChEBI" id="CHEBI:16389"/>
    </ligand>
</feature>
<protein>
    <recommendedName>
        <fullName>Cytochrome b</fullName>
    </recommendedName>
    <alternativeName>
        <fullName>Complex III subunit 3</fullName>
    </alternativeName>
    <alternativeName>
        <fullName>Complex III subunit III</fullName>
    </alternativeName>
    <alternativeName>
        <fullName>Cytochrome b-c1 complex subunit 3</fullName>
    </alternativeName>
    <alternativeName>
        <fullName>Ubiquinol-cytochrome-c reductase complex cytochrome b subunit</fullName>
    </alternativeName>
</protein>